<gene>
    <name evidence="1" type="primary">thyX</name>
    <name type="ordered locus">Tlet_1637</name>
</gene>
<feature type="chain" id="PRO_1000184602" description="Flavin-dependent thymidylate synthase">
    <location>
        <begin position="1"/>
        <end position="221"/>
    </location>
</feature>
<feature type="domain" description="ThyX" evidence="2">
    <location>
        <begin position="9"/>
        <end position="209"/>
    </location>
</feature>
<feature type="short sequence motif" description="ThyX motif" evidence="1">
    <location>
        <begin position="78"/>
        <end position="88"/>
    </location>
</feature>
<feature type="active site" description="Involved in ionization of N3 of dUMP, leading to its activation" evidence="1">
    <location>
        <position position="175"/>
    </location>
</feature>
<feature type="binding site" evidence="1">
    <location>
        <position position="55"/>
    </location>
    <ligand>
        <name>FAD</name>
        <dbReference type="ChEBI" id="CHEBI:57692"/>
        <note>ligand shared between neighboring subunits</note>
    </ligand>
</feature>
<feature type="binding site" evidence="1">
    <location>
        <begin position="75"/>
        <end position="78"/>
    </location>
    <ligand>
        <name>dUMP</name>
        <dbReference type="ChEBI" id="CHEBI:246422"/>
        <note>ligand shared between dimeric partners</note>
    </ligand>
</feature>
<feature type="binding site" evidence="1">
    <location>
        <begin position="78"/>
        <end position="80"/>
    </location>
    <ligand>
        <name>FAD</name>
        <dbReference type="ChEBI" id="CHEBI:57692"/>
        <note>ligand shared between neighboring subunits</note>
    </ligand>
</feature>
<feature type="binding site" description="in other chain" evidence="1">
    <location>
        <begin position="86"/>
        <end position="90"/>
    </location>
    <ligand>
        <name>dUMP</name>
        <dbReference type="ChEBI" id="CHEBI:246422"/>
        <note>ligand shared between dimeric partners</note>
    </ligand>
</feature>
<feature type="binding site" evidence="1">
    <location>
        <position position="86"/>
    </location>
    <ligand>
        <name>FAD</name>
        <dbReference type="ChEBI" id="CHEBI:57692"/>
        <note>ligand shared between neighboring subunits</note>
    </ligand>
</feature>
<feature type="binding site" description="in other chain" evidence="1">
    <location>
        <position position="148"/>
    </location>
    <ligand>
        <name>dUMP</name>
        <dbReference type="ChEBI" id="CHEBI:246422"/>
        <note>ligand shared between dimeric partners</note>
    </ligand>
</feature>
<feature type="binding site" evidence="1">
    <location>
        <begin position="164"/>
        <end position="166"/>
    </location>
    <ligand>
        <name>FAD</name>
        <dbReference type="ChEBI" id="CHEBI:57692"/>
        <note>ligand shared between neighboring subunits</note>
    </ligand>
</feature>
<feature type="binding site" evidence="1">
    <location>
        <position position="170"/>
    </location>
    <ligand>
        <name>FAD</name>
        <dbReference type="ChEBI" id="CHEBI:57692"/>
        <note>ligand shared between neighboring subunits</note>
    </ligand>
</feature>
<feature type="binding site" evidence="1">
    <location>
        <position position="175"/>
    </location>
    <ligand>
        <name>dUMP</name>
        <dbReference type="ChEBI" id="CHEBI:246422"/>
        <note>ligand shared between dimeric partners</note>
    </ligand>
</feature>
<comment type="function">
    <text evidence="1">Catalyzes the reductive methylation of 2'-deoxyuridine-5'-monophosphate (dUMP) to 2'-deoxythymidine-5'-monophosphate (dTMP) while utilizing 5,10-methylenetetrahydrofolate (mTHF) as the methyl donor, and NADPH and FADH(2) as the reductant.</text>
</comment>
<comment type="catalytic activity">
    <reaction evidence="1">
        <text>dUMP + (6R)-5,10-methylene-5,6,7,8-tetrahydrofolate + NADPH + H(+) = dTMP + (6S)-5,6,7,8-tetrahydrofolate + NADP(+)</text>
        <dbReference type="Rhea" id="RHEA:29043"/>
        <dbReference type="ChEBI" id="CHEBI:15378"/>
        <dbReference type="ChEBI" id="CHEBI:15636"/>
        <dbReference type="ChEBI" id="CHEBI:57453"/>
        <dbReference type="ChEBI" id="CHEBI:57783"/>
        <dbReference type="ChEBI" id="CHEBI:58349"/>
        <dbReference type="ChEBI" id="CHEBI:63528"/>
        <dbReference type="ChEBI" id="CHEBI:246422"/>
        <dbReference type="EC" id="2.1.1.148"/>
    </reaction>
</comment>
<comment type="cofactor">
    <cofactor evidence="1">
        <name>FAD</name>
        <dbReference type="ChEBI" id="CHEBI:57692"/>
    </cofactor>
    <text evidence="1">Binds 4 FAD per tetramer. Each FAD binding site is formed by three monomers.</text>
</comment>
<comment type="pathway">
    <text evidence="1">Pyrimidine metabolism; dTTP biosynthesis.</text>
</comment>
<comment type="subunit">
    <text evidence="1">Homotetramer.</text>
</comment>
<comment type="similarity">
    <text evidence="1">Belongs to the thymidylate synthase ThyX family.</text>
</comment>
<accession>A8F7Q7</accession>
<dbReference type="EC" id="2.1.1.148" evidence="1"/>
<dbReference type="EMBL" id="CP000812">
    <property type="protein sequence ID" value="ABV34191.1"/>
    <property type="molecule type" value="Genomic_DNA"/>
</dbReference>
<dbReference type="RefSeq" id="WP_012003667.1">
    <property type="nucleotide sequence ID" value="NZ_BSDV01000001.1"/>
</dbReference>
<dbReference type="SMR" id="A8F7Q7"/>
<dbReference type="STRING" id="416591.Tlet_1637"/>
<dbReference type="KEGG" id="tle:Tlet_1637"/>
<dbReference type="eggNOG" id="COG1351">
    <property type="taxonomic scope" value="Bacteria"/>
</dbReference>
<dbReference type="HOGENOM" id="CLU_067790_0_0_0"/>
<dbReference type="OrthoDB" id="9774464at2"/>
<dbReference type="UniPathway" id="UPA00575"/>
<dbReference type="Proteomes" id="UP000002016">
    <property type="component" value="Chromosome"/>
</dbReference>
<dbReference type="GO" id="GO:0050660">
    <property type="term" value="F:flavin adenine dinucleotide binding"/>
    <property type="evidence" value="ECO:0007669"/>
    <property type="project" value="InterPro"/>
</dbReference>
<dbReference type="GO" id="GO:0070402">
    <property type="term" value="F:NADPH binding"/>
    <property type="evidence" value="ECO:0007669"/>
    <property type="project" value="TreeGrafter"/>
</dbReference>
<dbReference type="GO" id="GO:0050797">
    <property type="term" value="F:thymidylate synthase (FAD) activity"/>
    <property type="evidence" value="ECO:0007669"/>
    <property type="project" value="UniProtKB-UniRule"/>
</dbReference>
<dbReference type="GO" id="GO:0004799">
    <property type="term" value="F:thymidylate synthase activity"/>
    <property type="evidence" value="ECO:0007669"/>
    <property type="project" value="TreeGrafter"/>
</dbReference>
<dbReference type="GO" id="GO:0006231">
    <property type="term" value="P:dTMP biosynthetic process"/>
    <property type="evidence" value="ECO:0007669"/>
    <property type="project" value="UniProtKB-UniRule"/>
</dbReference>
<dbReference type="GO" id="GO:0006235">
    <property type="term" value="P:dTTP biosynthetic process"/>
    <property type="evidence" value="ECO:0007669"/>
    <property type="project" value="UniProtKB-UniRule"/>
</dbReference>
<dbReference type="GO" id="GO:0032259">
    <property type="term" value="P:methylation"/>
    <property type="evidence" value="ECO:0007669"/>
    <property type="project" value="UniProtKB-KW"/>
</dbReference>
<dbReference type="CDD" id="cd20175">
    <property type="entry name" value="ThyX"/>
    <property type="match status" value="1"/>
</dbReference>
<dbReference type="Gene3D" id="3.30.1360.170">
    <property type="match status" value="1"/>
</dbReference>
<dbReference type="HAMAP" id="MF_01408">
    <property type="entry name" value="ThyX"/>
    <property type="match status" value="1"/>
</dbReference>
<dbReference type="InterPro" id="IPR003669">
    <property type="entry name" value="Thymidylate_synthase_ThyX"/>
</dbReference>
<dbReference type="InterPro" id="IPR036098">
    <property type="entry name" value="Thymidylate_synthase_ThyX_sf"/>
</dbReference>
<dbReference type="NCBIfam" id="TIGR02170">
    <property type="entry name" value="thyX"/>
    <property type="match status" value="1"/>
</dbReference>
<dbReference type="PANTHER" id="PTHR34934">
    <property type="entry name" value="FLAVIN-DEPENDENT THYMIDYLATE SYNTHASE"/>
    <property type="match status" value="1"/>
</dbReference>
<dbReference type="PANTHER" id="PTHR34934:SF1">
    <property type="entry name" value="FLAVIN-DEPENDENT THYMIDYLATE SYNTHASE"/>
    <property type="match status" value="1"/>
</dbReference>
<dbReference type="Pfam" id="PF02511">
    <property type="entry name" value="Thy1"/>
    <property type="match status" value="1"/>
</dbReference>
<dbReference type="SUPFAM" id="SSF69796">
    <property type="entry name" value="Thymidylate synthase-complementing protein Thy1"/>
    <property type="match status" value="1"/>
</dbReference>
<dbReference type="PROSITE" id="PS51331">
    <property type="entry name" value="THYX"/>
    <property type="match status" value="1"/>
</dbReference>
<protein>
    <recommendedName>
        <fullName evidence="1">Flavin-dependent thymidylate synthase</fullName>
        <shortName evidence="1">FDTS</shortName>
        <ecNumber evidence="1">2.1.1.148</ecNumber>
    </recommendedName>
    <alternativeName>
        <fullName evidence="1">FAD-dependent thymidylate synthase</fullName>
    </alternativeName>
    <alternativeName>
        <fullName evidence="1">Thymidylate synthase ThyX</fullName>
        <shortName evidence="1">TS</shortName>
        <shortName evidence="1">TSase</shortName>
    </alternativeName>
</protein>
<organism>
    <name type="scientific">Pseudothermotoga lettingae (strain ATCC BAA-301 / DSM 14385 / NBRC 107922 / TMO)</name>
    <name type="common">Thermotoga lettingae</name>
    <dbReference type="NCBI Taxonomy" id="416591"/>
    <lineage>
        <taxon>Bacteria</taxon>
        <taxon>Thermotogati</taxon>
        <taxon>Thermotogota</taxon>
        <taxon>Thermotogae</taxon>
        <taxon>Thermotogales</taxon>
        <taxon>Thermotogaceae</taxon>
        <taxon>Pseudothermotoga</taxon>
    </lineage>
</organism>
<sequence>MTIEVLDRGFVKLLDHMGDDFSAVKAARISHGRDLIDEERDRKLIEYLLRSGHESPFEHIVFTFHIKCPIFVARQWMRHRIASYNELSGRYTELAEEFYLPDLYKRYGERLNENDLQKASKLIEESYKKSHEAYKCLIDMKIPKELARVVLPFATYTQFIWSVNARSLMNFLSLRADSHSQWEMQQFALAVAQVFKSICPWTYESFIRYRYEGDLLKGVNP</sequence>
<proteinExistence type="inferred from homology"/>
<name>THYX_PSELT</name>
<evidence type="ECO:0000255" key="1">
    <source>
        <dbReference type="HAMAP-Rule" id="MF_01408"/>
    </source>
</evidence>
<evidence type="ECO:0000255" key="2">
    <source>
        <dbReference type="PROSITE-ProRule" id="PRU00661"/>
    </source>
</evidence>
<reference key="1">
    <citation type="submission" date="2007-08" db="EMBL/GenBank/DDBJ databases">
        <title>Complete sequence of Thermotoga lettingae TMO.</title>
        <authorList>
            <consortium name="US DOE Joint Genome Institute"/>
            <person name="Copeland A."/>
            <person name="Lucas S."/>
            <person name="Lapidus A."/>
            <person name="Barry K."/>
            <person name="Glavina del Rio T."/>
            <person name="Dalin E."/>
            <person name="Tice H."/>
            <person name="Pitluck S."/>
            <person name="Foster B."/>
            <person name="Bruce D."/>
            <person name="Schmutz J."/>
            <person name="Larimer F."/>
            <person name="Land M."/>
            <person name="Hauser L."/>
            <person name="Kyrpides N."/>
            <person name="Mikhailova N."/>
            <person name="Nelson K."/>
            <person name="Gogarten J.P."/>
            <person name="Noll K."/>
            <person name="Richardson P."/>
        </authorList>
    </citation>
    <scope>NUCLEOTIDE SEQUENCE [LARGE SCALE GENOMIC DNA]</scope>
    <source>
        <strain>ATCC BAA-301 / DSM 14385 / NBRC 107922 / TMO</strain>
    </source>
</reference>
<keyword id="KW-0274">FAD</keyword>
<keyword id="KW-0285">Flavoprotein</keyword>
<keyword id="KW-0489">Methyltransferase</keyword>
<keyword id="KW-0521">NADP</keyword>
<keyword id="KW-0545">Nucleotide biosynthesis</keyword>
<keyword id="KW-1185">Reference proteome</keyword>
<keyword id="KW-0808">Transferase</keyword>